<feature type="signal peptide" evidence="1">
    <location>
        <begin position="1"/>
        <end position="20"/>
    </location>
</feature>
<feature type="chain" id="PRO_1000145779" description="Outer membrane protein assembly factor BamA">
    <location>
        <begin position="21"/>
        <end position="802"/>
    </location>
</feature>
<feature type="domain" description="POTRA 1" evidence="2">
    <location>
        <begin position="24"/>
        <end position="91"/>
    </location>
</feature>
<feature type="domain" description="POTRA 2" evidence="2">
    <location>
        <begin position="92"/>
        <end position="172"/>
    </location>
</feature>
<feature type="domain" description="POTRA 3" evidence="2">
    <location>
        <begin position="175"/>
        <end position="263"/>
    </location>
</feature>
<feature type="domain" description="POTRA 4" evidence="2">
    <location>
        <begin position="266"/>
        <end position="344"/>
    </location>
</feature>
<feature type="domain" description="POTRA 5" evidence="2">
    <location>
        <begin position="347"/>
        <end position="421"/>
    </location>
</feature>
<dbReference type="EMBL" id="CU928158">
    <property type="protein sequence ID" value="CAQ87780.1"/>
    <property type="molecule type" value="Genomic_DNA"/>
</dbReference>
<dbReference type="RefSeq" id="WP_001240913.1">
    <property type="nucleotide sequence ID" value="NC_011740.1"/>
</dbReference>
<dbReference type="SMR" id="B7LW74"/>
<dbReference type="GeneID" id="75058716"/>
<dbReference type="KEGG" id="efe:EFER_0199"/>
<dbReference type="HOGENOM" id="CLU_007664_1_0_6"/>
<dbReference type="OrthoDB" id="9803054at2"/>
<dbReference type="Proteomes" id="UP000000745">
    <property type="component" value="Chromosome"/>
</dbReference>
<dbReference type="GO" id="GO:1990063">
    <property type="term" value="C:Bam protein complex"/>
    <property type="evidence" value="ECO:0007669"/>
    <property type="project" value="TreeGrafter"/>
</dbReference>
<dbReference type="GO" id="GO:0043165">
    <property type="term" value="P:Gram-negative-bacterium-type cell outer membrane assembly"/>
    <property type="evidence" value="ECO:0007669"/>
    <property type="project" value="UniProtKB-UniRule"/>
</dbReference>
<dbReference type="GO" id="GO:0051205">
    <property type="term" value="P:protein insertion into membrane"/>
    <property type="evidence" value="ECO:0007669"/>
    <property type="project" value="UniProtKB-UniRule"/>
</dbReference>
<dbReference type="FunFam" id="2.40.160.50:FF:000001">
    <property type="entry name" value="Outer membrane protein assembly factor BamA"/>
    <property type="match status" value="1"/>
</dbReference>
<dbReference type="FunFam" id="3.10.20.310:FF:000001">
    <property type="entry name" value="Outer membrane protein assembly factor BamA"/>
    <property type="match status" value="1"/>
</dbReference>
<dbReference type="FunFam" id="3.10.20.310:FF:000002">
    <property type="entry name" value="Outer membrane protein assembly factor BamA"/>
    <property type="match status" value="1"/>
</dbReference>
<dbReference type="FunFam" id="3.10.20.310:FF:000003">
    <property type="entry name" value="Outer membrane protein assembly factor BamA"/>
    <property type="match status" value="1"/>
</dbReference>
<dbReference type="FunFam" id="3.10.20.310:FF:000004">
    <property type="entry name" value="Outer membrane protein assembly factor BamA"/>
    <property type="match status" value="1"/>
</dbReference>
<dbReference type="FunFam" id="3.10.20.310:FF:000005">
    <property type="entry name" value="Outer membrane protein assembly factor BamA"/>
    <property type="match status" value="1"/>
</dbReference>
<dbReference type="Gene3D" id="3.10.20.310">
    <property type="entry name" value="membrane protein fhac"/>
    <property type="match status" value="5"/>
</dbReference>
<dbReference type="Gene3D" id="2.40.160.50">
    <property type="entry name" value="membrane protein fhac: a member of the omp85/tpsb transporter family"/>
    <property type="match status" value="1"/>
</dbReference>
<dbReference type="HAMAP" id="MF_01430">
    <property type="entry name" value="OM_assembly_BamA"/>
    <property type="match status" value="1"/>
</dbReference>
<dbReference type="InterPro" id="IPR000184">
    <property type="entry name" value="Bac_surfAg_D15"/>
</dbReference>
<dbReference type="InterPro" id="IPR010827">
    <property type="entry name" value="BamA/TamA_POTRA"/>
</dbReference>
<dbReference type="InterPro" id="IPR039910">
    <property type="entry name" value="D15-like"/>
</dbReference>
<dbReference type="InterPro" id="IPR023707">
    <property type="entry name" value="OM_assembly_BamA"/>
</dbReference>
<dbReference type="InterPro" id="IPR034746">
    <property type="entry name" value="POTRA"/>
</dbReference>
<dbReference type="NCBIfam" id="TIGR03303">
    <property type="entry name" value="OM_YaeT"/>
    <property type="match status" value="1"/>
</dbReference>
<dbReference type="NCBIfam" id="NF008287">
    <property type="entry name" value="PRK11067.1"/>
    <property type="match status" value="1"/>
</dbReference>
<dbReference type="PANTHER" id="PTHR12815:SF23">
    <property type="entry name" value="OUTER MEMBRANE PROTEIN ASSEMBLY FACTOR BAMA"/>
    <property type="match status" value="1"/>
</dbReference>
<dbReference type="PANTHER" id="PTHR12815">
    <property type="entry name" value="SORTING AND ASSEMBLY MACHINERY SAMM50 PROTEIN FAMILY MEMBER"/>
    <property type="match status" value="1"/>
</dbReference>
<dbReference type="Pfam" id="PF01103">
    <property type="entry name" value="Omp85"/>
    <property type="match status" value="1"/>
</dbReference>
<dbReference type="Pfam" id="PF07244">
    <property type="entry name" value="POTRA"/>
    <property type="match status" value="4"/>
</dbReference>
<dbReference type="PIRSF" id="PIRSF006076">
    <property type="entry name" value="OM_assembly_OMP85"/>
    <property type="match status" value="1"/>
</dbReference>
<dbReference type="PROSITE" id="PS51779">
    <property type="entry name" value="POTRA"/>
    <property type="match status" value="5"/>
</dbReference>
<evidence type="ECO:0000255" key="1">
    <source>
        <dbReference type="HAMAP-Rule" id="MF_01430"/>
    </source>
</evidence>
<evidence type="ECO:0000255" key="2">
    <source>
        <dbReference type="PROSITE-ProRule" id="PRU01115"/>
    </source>
</evidence>
<keyword id="KW-0998">Cell outer membrane</keyword>
<keyword id="KW-0472">Membrane</keyword>
<keyword id="KW-0677">Repeat</keyword>
<keyword id="KW-0732">Signal</keyword>
<keyword id="KW-0812">Transmembrane</keyword>
<keyword id="KW-1134">Transmembrane beta strand</keyword>
<protein>
    <recommendedName>
        <fullName evidence="1">Outer membrane protein assembly factor BamA</fullName>
    </recommendedName>
</protein>
<gene>
    <name evidence="1" type="primary">bamA</name>
    <name type="synonym">yaeT</name>
    <name type="ordered locus">EFER_0199</name>
</gene>
<sequence length="802" mass="89630">MAMKKLLIASLLFSSATVYGAEGFVVKDIHFEGLQRVAVGAALLSMPVRTGDTVNDEDISNTIRALFATGNFEDVRVLRDGDTLLVQVKERPTIASITFSGNKSVKDDMLKQNLEASGVRVGESLDRTTIADIEKGLEDFYYSVGKYSASVKAVVTPLPRNRVDLKLVFQEGVSATIQQINIVGNHAFTTNELISHFQLRDEVPWWNVVGDRKYQKQKLAGDLETLRSYYLDRGYARFNIDSTQVSLTPDKKGIYITVNITEGDQYKLSGVQVTGNLAGHSAEIEELTKIEPGELYNGTKVTKMEDDIKKLLGRYGYAYPRVQSMPEINDADKTVKLRVNVDAGNRFYVRKIRFEGNDTSKDSVLRREMRQMEGAWLGSDLVDQGKERLNRLGYFETVDTDTQRVPGSPDQVDVVYKVKERNTGSFNFGIGYGTESGVSFQIGVQQDNWLGTGYAVGINGTKNDYQTYSELSVTNPYFTVDGVSLGGRIFYNDFQADDADLSDYTNKSYGTDVTLGFPINEYNSLRAGLGYVHNKLSNMQPQVAMDRYLESMGEYGKDSFAADDFTFNYGWTYNKLDRGYFPTDGSRVNLTGKVTIPGSDNEYYKLSLDTATYVPIDDDHKWVVLGRTRWGYGDGIGGKEMPFYENFYAGGSSTVRGFQSNTIGPKAVYKKGAHSSNDEYDDYEECTESNGCQSDDAVGGNAMAVASFELITPTPFISEKYANSVRTSLFWDMGTVWDTNWQASRYPDYPDYSDPGNIRMSAGIALQWMSPLGPLVFSYAQPFKKYDGDKAEQFQFNIGKTW</sequence>
<proteinExistence type="inferred from homology"/>
<accession>B7LW74</accession>
<organism>
    <name type="scientific">Escherichia fergusonii (strain ATCC 35469 / DSM 13698 / CCUG 18766 / IAM 14443 / JCM 21226 / LMG 7866 / NBRC 102419 / NCTC 12128 / CDC 0568-73)</name>
    <dbReference type="NCBI Taxonomy" id="585054"/>
    <lineage>
        <taxon>Bacteria</taxon>
        <taxon>Pseudomonadati</taxon>
        <taxon>Pseudomonadota</taxon>
        <taxon>Gammaproteobacteria</taxon>
        <taxon>Enterobacterales</taxon>
        <taxon>Enterobacteriaceae</taxon>
        <taxon>Escherichia</taxon>
    </lineage>
</organism>
<comment type="function">
    <text evidence="1">Part of the outer membrane protein assembly complex, which is involved in assembly and insertion of beta-barrel proteins into the outer membrane. Constitutes, with BamD, the core component of the assembly machinery.</text>
</comment>
<comment type="subunit">
    <text evidence="1">Part of the Bam complex, which is composed of the outer membrane protein BamA, and four lipoproteins BamB, BamC, BamD and BamE.</text>
</comment>
<comment type="subcellular location">
    <subcellularLocation>
        <location evidence="1">Cell outer membrane</location>
    </subcellularLocation>
</comment>
<comment type="similarity">
    <text evidence="1">Belongs to the BamA family.</text>
</comment>
<name>BAMA_ESCF3</name>
<reference key="1">
    <citation type="journal article" date="2009" name="PLoS Genet.">
        <title>Organised genome dynamics in the Escherichia coli species results in highly diverse adaptive paths.</title>
        <authorList>
            <person name="Touchon M."/>
            <person name="Hoede C."/>
            <person name="Tenaillon O."/>
            <person name="Barbe V."/>
            <person name="Baeriswyl S."/>
            <person name="Bidet P."/>
            <person name="Bingen E."/>
            <person name="Bonacorsi S."/>
            <person name="Bouchier C."/>
            <person name="Bouvet O."/>
            <person name="Calteau A."/>
            <person name="Chiapello H."/>
            <person name="Clermont O."/>
            <person name="Cruveiller S."/>
            <person name="Danchin A."/>
            <person name="Diard M."/>
            <person name="Dossat C."/>
            <person name="Karoui M.E."/>
            <person name="Frapy E."/>
            <person name="Garry L."/>
            <person name="Ghigo J.M."/>
            <person name="Gilles A.M."/>
            <person name="Johnson J."/>
            <person name="Le Bouguenec C."/>
            <person name="Lescat M."/>
            <person name="Mangenot S."/>
            <person name="Martinez-Jehanne V."/>
            <person name="Matic I."/>
            <person name="Nassif X."/>
            <person name="Oztas S."/>
            <person name="Petit M.A."/>
            <person name="Pichon C."/>
            <person name="Rouy Z."/>
            <person name="Ruf C.S."/>
            <person name="Schneider D."/>
            <person name="Tourret J."/>
            <person name="Vacherie B."/>
            <person name="Vallenet D."/>
            <person name="Medigue C."/>
            <person name="Rocha E.P.C."/>
            <person name="Denamur E."/>
        </authorList>
    </citation>
    <scope>NUCLEOTIDE SEQUENCE [LARGE SCALE GENOMIC DNA]</scope>
    <source>
        <strain>ATCC 35469 / DSM 13698 / BCRC 15582 / CCUG 18766 / IAM 14443 / JCM 21226 / LMG 7866 / NBRC 102419 / NCTC 12128 / CDC 0568-73</strain>
    </source>
</reference>